<name>SYK_BURM1</name>
<feature type="chain" id="PRO_1000101102" description="Lysine--tRNA ligase">
    <location>
        <begin position="1"/>
        <end position="508"/>
    </location>
</feature>
<feature type="binding site" evidence="1">
    <location>
        <position position="418"/>
    </location>
    <ligand>
        <name>Mg(2+)</name>
        <dbReference type="ChEBI" id="CHEBI:18420"/>
        <label>1</label>
    </ligand>
</feature>
<feature type="binding site" evidence="1">
    <location>
        <position position="425"/>
    </location>
    <ligand>
        <name>Mg(2+)</name>
        <dbReference type="ChEBI" id="CHEBI:18420"/>
        <label>1</label>
    </ligand>
</feature>
<feature type="binding site" evidence="1">
    <location>
        <position position="425"/>
    </location>
    <ligand>
        <name>Mg(2+)</name>
        <dbReference type="ChEBI" id="CHEBI:18420"/>
        <label>2</label>
    </ligand>
</feature>
<keyword id="KW-0030">Aminoacyl-tRNA synthetase</keyword>
<keyword id="KW-0067">ATP-binding</keyword>
<keyword id="KW-0963">Cytoplasm</keyword>
<keyword id="KW-0436">Ligase</keyword>
<keyword id="KW-0460">Magnesium</keyword>
<keyword id="KW-0479">Metal-binding</keyword>
<keyword id="KW-0547">Nucleotide-binding</keyword>
<keyword id="KW-0648">Protein biosynthesis</keyword>
<keyword id="KW-1185">Reference proteome</keyword>
<organism>
    <name type="scientific">Burkholderia multivorans (strain ATCC 17616 / 249)</name>
    <dbReference type="NCBI Taxonomy" id="395019"/>
    <lineage>
        <taxon>Bacteria</taxon>
        <taxon>Pseudomonadati</taxon>
        <taxon>Pseudomonadota</taxon>
        <taxon>Betaproteobacteria</taxon>
        <taxon>Burkholderiales</taxon>
        <taxon>Burkholderiaceae</taxon>
        <taxon>Burkholderia</taxon>
        <taxon>Burkholderia cepacia complex</taxon>
    </lineage>
</organism>
<proteinExistence type="inferred from homology"/>
<reference key="1">
    <citation type="submission" date="2007-10" db="EMBL/GenBank/DDBJ databases">
        <title>Complete sequence of chromosome 1 of Burkholderia multivorans ATCC 17616.</title>
        <authorList>
            <person name="Copeland A."/>
            <person name="Lucas S."/>
            <person name="Lapidus A."/>
            <person name="Barry K."/>
            <person name="Glavina del Rio T."/>
            <person name="Dalin E."/>
            <person name="Tice H."/>
            <person name="Pitluck S."/>
            <person name="Chain P."/>
            <person name="Malfatti S."/>
            <person name="Shin M."/>
            <person name="Vergez L."/>
            <person name="Schmutz J."/>
            <person name="Larimer F."/>
            <person name="Land M."/>
            <person name="Hauser L."/>
            <person name="Kyrpides N."/>
            <person name="Kim E."/>
            <person name="Tiedje J."/>
            <person name="Richardson P."/>
        </authorList>
    </citation>
    <scope>NUCLEOTIDE SEQUENCE [LARGE SCALE GENOMIC DNA]</scope>
    <source>
        <strain>ATCC 17616 / 249</strain>
    </source>
</reference>
<reference key="2">
    <citation type="submission" date="2007-04" db="EMBL/GenBank/DDBJ databases">
        <title>Complete genome sequence of Burkholderia multivorans ATCC 17616.</title>
        <authorList>
            <person name="Ohtsubo Y."/>
            <person name="Yamashita A."/>
            <person name="Kurokawa K."/>
            <person name="Takami H."/>
            <person name="Yuhara S."/>
            <person name="Nishiyama E."/>
            <person name="Endo R."/>
            <person name="Miyazaki R."/>
            <person name="Ono A."/>
            <person name="Yano K."/>
            <person name="Ito M."/>
            <person name="Sota M."/>
            <person name="Yuji N."/>
            <person name="Hattori M."/>
            <person name="Tsuda M."/>
        </authorList>
    </citation>
    <scope>NUCLEOTIDE SEQUENCE [LARGE SCALE GENOMIC DNA]</scope>
    <source>
        <strain>ATCC 17616 / 249</strain>
    </source>
</reference>
<dbReference type="EC" id="6.1.1.6" evidence="1"/>
<dbReference type="EMBL" id="CP000868">
    <property type="protein sequence ID" value="ABX14842.1"/>
    <property type="molecule type" value="Genomic_DNA"/>
</dbReference>
<dbReference type="EMBL" id="AP009385">
    <property type="protein sequence ID" value="BAG44009.1"/>
    <property type="molecule type" value="Genomic_DNA"/>
</dbReference>
<dbReference type="RefSeq" id="WP_012213080.1">
    <property type="nucleotide sequence ID" value="NC_010084.1"/>
</dbReference>
<dbReference type="SMR" id="A9AGV1"/>
<dbReference type="STRING" id="395019.BMULJ_02102"/>
<dbReference type="KEGG" id="bmj:BMULJ_02102"/>
<dbReference type="KEGG" id="bmu:Bmul_1152"/>
<dbReference type="eggNOG" id="COG1190">
    <property type="taxonomic scope" value="Bacteria"/>
</dbReference>
<dbReference type="HOGENOM" id="CLU_008255_6_0_4"/>
<dbReference type="Proteomes" id="UP000008815">
    <property type="component" value="Chromosome 1"/>
</dbReference>
<dbReference type="GO" id="GO:0005829">
    <property type="term" value="C:cytosol"/>
    <property type="evidence" value="ECO:0007669"/>
    <property type="project" value="TreeGrafter"/>
</dbReference>
<dbReference type="GO" id="GO:0005524">
    <property type="term" value="F:ATP binding"/>
    <property type="evidence" value="ECO:0007669"/>
    <property type="project" value="UniProtKB-UniRule"/>
</dbReference>
<dbReference type="GO" id="GO:0004824">
    <property type="term" value="F:lysine-tRNA ligase activity"/>
    <property type="evidence" value="ECO:0007669"/>
    <property type="project" value="UniProtKB-UniRule"/>
</dbReference>
<dbReference type="GO" id="GO:0000287">
    <property type="term" value="F:magnesium ion binding"/>
    <property type="evidence" value="ECO:0007669"/>
    <property type="project" value="UniProtKB-UniRule"/>
</dbReference>
<dbReference type="GO" id="GO:0000049">
    <property type="term" value="F:tRNA binding"/>
    <property type="evidence" value="ECO:0007669"/>
    <property type="project" value="TreeGrafter"/>
</dbReference>
<dbReference type="GO" id="GO:0006430">
    <property type="term" value="P:lysyl-tRNA aminoacylation"/>
    <property type="evidence" value="ECO:0007669"/>
    <property type="project" value="UniProtKB-UniRule"/>
</dbReference>
<dbReference type="CDD" id="cd00775">
    <property type="entry name" value="LysRS_core"/>
    <property type="match status" value="1"/>
</dbReference>
<dbReference type="CDD" id="cd04322">
    <property type="entry name" value="LysRS_N"/>
    <property type="match status" value="1"/>
</dbReference>
<dbReference type="FunFam" id="2.40.50.140:FF:000024">
    <property type="entry name" value="Lysine--tRNA ligase"/>
    <property type="match status" value="1"/>
</dbReference>
<dbReference type="FunFam" id="3.30.930.10:FF:000001">
    <property type="entry name" value="Lysine--tRNA ligase"/>
    <property type="match status" value="1"/>
</dbReference>
<dbReference type="Gene3D" id="3.30.930.10">
    <property type="entry name" value="Bira Bifunctional Protein, Domain 2"/>
    <property type="match status" value="1"/>
</dbReference>
<dbReference type="Gene3D" id="2.40.50.140">
    <property type="entry name" value="Nucleic acid-binding proteins"/>
    <property type="match status" value="1"/>
</dbReference>
<dbReference type="HAMAP" id="MF_00252">
    <property type="entry name" value="Lys_tRNA_synth_class2"/>
    <property type="match status" value="1"/>
</dbReference>
<dbReference type="InterPro" id="IPR004364">
    <property type="entry name" value="Aa-tRNA-synt_II"/>
</dbReference>
<dbReference type="InterPro" id="IPR006195">
    <property type="entry name" value="aa-tRNA-synth_II"/>
</dbReference>
<dbReference type="InterPro" id="IPR045864">
    <property type="entry name" value="aa-tRNA-synth_II/BPL/LPL"/>
</dbReference>
<dbReference type="InterPro" id="IPR002313">
    <property type="entry name" value="Lys-tRNA-ligase_II"/>
</dbReference>
<dbReference type="InterPro" id="IPR044136">
    <property type="entry name" value="Lys-tRNA-ligase_II_N"/>
</dbReference>
<dbReference type="InterPro" id="IPR018149">
    <property type="entry name" value="Lys-tRNA-synth_II_C"/>
</dbReference>
<dbReference type="InterPro" id="IPR012340">
    <property type="entry name" value="NA-bd_OB-fold"/>
</dbReference>
<dbReference type="InterPro" id="IPR004365">
    <property type="entry name" value="NA-bd_OB_tRNA"/>
</dbReference>
<dbReference type="NCBIfam" id="TIGR00499">
    <property type="entry name" value="lysS_bact"/>
    <property type="match status" value="1"/>
</dbReference>
<dbReference type="NCBIfam" id="NF001756">
    <property type="entry name" value="PRK00484.1"/>
    <property type="match status" value="1"/>
</dbReference>
<dbReference type="PANTHER" id="PTHR42918:SF15">
    <property type="entry name" value="LYSINE--TRNA LIGASE, CHLOROPLASTIC_MITOCHONDRIAL"/>
    <property type="match status" value="1"/>
</dbReference>
<dbReference type="PANTHER" id="PTHR42918">
    <property type="entry name" value="LYSYL-TRNA SYNTHETASE"/>
    <property type="match status" value="1"/>
</dbReference>
<dbReference type="Pfam" id="PF00152">
    <property type="entry name" value="tRNA-synt_2"/>
    <property type="match status" value="1"/>
</dbReference>
<dbReference type="Pfam" id="PF01336">
    <property type="entry name" value="tRNA_anti-codon"/>
    <property type="match status" value="1"/>
</dbReference>
<dbReference type="PRINTS" id="PR00982">
    <property type="entry name" value="TRNASYNTHLYS"/>
</dbReference>
<dbReference type="SUPFAM" id="SSF55681">
    <property type="entry name" value="Class II aaRS and biotin synthetases"/>
    <property type="match status" value="1"/>
</dbReference>
<dbReference type="SUPFAM" id="SSF50249">
    <property type="entry name" value="Nucleic acid-binding proteins"/>
    <property type="match status" value="1"/>
</dbReference>
<dbReference type="PROSITE" id="PS50862">
    <property type="entry name" value="AA_TRNA_LIGASE_II"/>
    <property type="match status" value="1"/>
</dbReference>
<accession>A9AGV1</accession>
<evidence type="ECO:0000255" key="1">
    <source>
        <dbReference type="HAMAP-Rule" id="MF_00252"/>
    </source>
</evidence>
<protein>
    <recommendedName>
        <fullName evidence="1">Lysine--tRNA ligase</fullName>
        <ecNumber evidence="1">6.1.1.6</ecNumber>
    </recommendedName>
    <alternativeName>
        <fullName evidence="1">Lysyl-tRNA synthetase</fullName>
        <shortName evidence="1">LysRS</shortName>
    </alternativeName>
</protein>
<comment type="catalytic activity">
    <reaction evidence="1">
        <text>tRNA(Lys) + L-lysine + ATP = L-lysyl-tRNA(Lys) + AMP + diphosphate</text>
        <dbReference type="Rhea" id="RHEA:20792"/>
        <dbReference type="Rhea" id="RHEA-COMP:9696"/>
        <dbReference type="Rhea" id="RHEA-COMP:9697"/>
        <dbReference type="ChEBI" id="CHEBI:30616"/>
        <dbReference type="ChEBI" id="CHEBI:32551"/>
        <dbReference type="ChEBI" id="CHEBI:33019"/>
        <dbReference type="ChEBI" id="CHEBI:78442"/>
        <dbReference type="ChEBI" id="CHEBI:78529"/>
        <dbReference type="ChEBI" id="CHEBI:456215"/>
        <dbReference type="EC" id="6.1.1.6"/>
    </reaction>
</comment>
<comment type="cofactor">
    <cofactor evidence="1">
        <name>Mg(2+)</name>
        <dbReference type="ChEBI" id="CHEBI:18420"/>
    </cofactor>
    <text evidence="1">Binds 3 Mg(2+) ions per subunit.</text>
</comment>
<comment type="subunit">
    <text evidence="1">Homodimer.</text>
</comment>
<comment type="subcellular location">
    <subcellularLocation>
        <location evidence="1">Cytoplasm</location>
    </subcellularLocation>
</comment>
<comment type="similarity">
    <text evidence="1">Belongs to the class-II aminoacyl-tRNA synthetase family.</text>
</comment>
<sequence>MTEPTQTQPAVAADENQIIAERRDKLRALREQGVAYPNDFRPTHRAAELQAKFAESDKEALEANPFEVAVAGRMMLKRVMGKASFATVQDGSGQIQFFVTPNDVGAETYDAFKKWDLGDIVAARGVLFRTNKGELSVKCTELRLLSKALRPLPDKFHGLSDQEMRYRQRYVDLIVTPETRDTFRARTKTIASIRKFMSDAEFMEVETPMLHPIPGGAAAKPFVTHHNALDMQMFLRIAPELYLKRLIVGGFERVFEINRNFRNEGVSPRHNPEFTMMEFYAAYTDYRWLMDFTEQLIRQAAIDALGTATIQYQGRELDLAKPFHRLTITQAIQKYAPQYTDGQLSDNAYLRSELKRLGVDVTQPAFLNAGIGALQLALFEETAESQLWEPTFIIDYPVEVSPLARASDTVPGITERFELFITGREIANGFSELNDPEDQAARFKKQVEQKDAGDEEAMYFDADYIRALEYGMPPTGGCGIGIDRLVMLLTDSPTIRDVLLFPHLRRED</sequence>
<gene>
    <name evidence="1" type="primary">lysS</name>
    <name type="ordered locus">Bmul_1152</name>
    <name type="ordered locus">BMULJ_02102</name>
</gene>